<comment type="function">
    <text evidence="3">Plays a role in broad-spectrum disease resistance. Probably has no oxalate oxidase activity even if the active site is conserved.</text>
</comment>
<comment type="subunit">
    <text evidence="1">Oligomer (believed to be a pentamer but probably hexamer).</text>
</comment>
<comment type="subcellular location">
    <subcellularLocation>
        <location evidence="1">Secreted</location>
        <location evidence="1">Extracellular space</location>
        <location evidence="1">Apoplast</location>
    </subcellularLocation>
</comment>
<comment type="miscellaneous">
    <text>Member of the 12 germin-like protein gene cluster located on chromosome 8 in the major-effect quantitative trait loci (QTL) for fungal blast resistance. Partial suppression of the 12 germin-like protein genes increases susceptibility to the fungal pathogens causing rice blast and sheath blight diseases.</text>
</comment>
<comment type="similarity">
    <text evidence="4">Belongs to the germin family.</text>
</comment>
<accession>Q6YZZ2</accession>
<accession>A0A0N7KPE0</accession>
<accession>O49002</accession>
<protein>
    <recommendedName>
        <fullName>Germin-like protein 8-7</fullName>
    </recommendedName>
    <alternativeName>
        <fullName>Germin-like protein 6</fullName>
        <shortName>OsGER6</shortName>
    </alternativeName>
</protein>
<reference key="1">
    <citation type="online journal article" date="1998" name="Plant Gene Register">
        <title>The rice genome expresses at least six different genes for oxalate oxidase/germin-like proteins.</title>
        <authorList>
            <person name="Membre N."/>
            <person name="Bernier F."/>
        </authorList>
        <locator>PGR98-021</locator>
    </citation>
    <scope>NUCLEOTIDE SEQUENCE [MRNA]</scope>
    <source>
        <strain>cv. Nipponbare</strain>
    </source>
</reference>
<reference key="2">
    <citation type="journal article" date="2005" name="Nature">
        <title>The map-based sequence of the rice genome.</title>
        <authorList>
            <consortium name="International rice genome sequencing project (IRGSP)"/>
        </authorList>
    </citation>
    <scope>NUCLEOTIDE SEQUENCE [LARGE SCALE GENOMIC DNA]</scope>
    <source>
        <strain>cv. Nipponbare</strain>
    </source>
</reference>
<reference key="3">
    <citation type="journal article" date="2008" name="Nucleic Acids Res.">
        <title>The rice annotation project database (RAP-DB): 2008 update.</title>
        <authorList>
            <consortium name="The rice annotation project (RAP)"/>
        </authorList>
    </citation>
    <scope>GENOME REANNOTATION</scope>
    <source>
        <strain>cv. Nipponbare</strain>
    </source>
</reference>
<reference key="4">
    <citation type="journal article" date="2013" name="Rice">
        <title>Improvement of the Oryza sativa Nipponbare reference genome using next generation sequence and optical map data.</title>
        <authorList>
            <person name="Kawahara Y."/>
            <person name="de la Bastide M."/>
            <person name="Hamilton J.P."/>
            <person name="Kanamori H."/>
            <person name="McCombie W.R."/>
            <person name="Ouyang S."/>
            <person name="Schwartz D.C."/>
            <person name="Tanaka T."/>
            <person name="Wu J."/>
            <person name="Zhou S."/>
            <person name="Childs K.L."/>
            <person name="Davidson R.M."/>
            <person name="Lin H."/>
            <person name="Quesada-Ocampo L."/>
            <person name="Vaillancourt B."/>
            <person name="Sakai H."/>
            <person name="Lee S.S."/>
            <person name="Kim J."/>
            <person name="Numa H."/>
            <person name="Itoh T."/>
            <person name="Buell C.R."/>
            <person name="Matsumoto T."/>
        </authorList>
    </citation>
    <scope>GENOME REANNOTATION</scope>
    <source>
        <strain>cv. Nipponbare</strain>
    </source>
</reference>
<reference key="5">
    <citation type="journal article" date="2005" name="PLoS Biol.">
        <title>The genomes of Oryza sativa: a history of duplications.</title>
        <authorList>
            <person name="Yu J."/>
            <person name="Wang J."/>
            <person name="Lin W."/>
            <person name="Li S."/>
            <person name="Li H."/>
            <person name="Zhou J."/>
            <person name="Ni P."/>
            <person name="Dong W."/>
            <person name="Hu S."/>
            <person name="Zeng C."/>
            <person name="Zhang J."/>
            <person name="Zhang Y."/>
            <person name="Li R."/>
            <person name="Xu Z."/>
            <person name="Li S."/>
            <person name="Li X."/>
            <person name="Zheng H."/>
            <person name="Cong L."/>
            <person name="Lin L."/>
            <person name="Yin J."/>
            <person name="Geng J."/>
            <person name="Li G."/>
            <person name="Shi J."/>
            <person name="Liu J."/>
            <person name="Lv H."/>
            <person name="Li J."/>
            <person name="Wang J."/>
            <person name="Deng Y."/>
            <person name="Ran L."/>
            <person name="Shi X."/>
            <person name="Wang X."/>
            <person name="Wu Q."/>
            <person name="Li C."/>
            <person name="Ren X."/>
            <person name="Wang J."/>
            <person name="Wang X."/>
            <person name="Li D."/>
            <person name="Liu D."/>
            <person name="Zhang X."/>
            <person name="Ji Z."/>
            <person name="Zhao W."/>
            <person name="Sun Y."/>
            <person name="Zhang Z."/>
            <person name="Bao J."/>
            <person name="Han Y."/>
            <person name="Dong L."/>
            <person name="Ji J."/>
            <person name="Chen P."/>
            <person name="Wu S."/>
            <person name="Liu J."/>
            <person name="Xiao Y."/>
            <person name="Bu D."/>
            <person name="Tan J."/>
            <person name="Yang L."/>
            <person name="Ye C."/>
            <person name="Zhang J."/>
            <person name="Xu J."/>
            <person name="Zhou Y."/>
            <person name="Yu Y."/>
            <person name="Zhang B."/>
            <person name="Zhuang S."/>
            <person name="Wei H."/>
            <person name="Liu B."/>
            <person name="Lei M."/>
            <person name="Yu H."/>
            <person name="Li Y."/>
            <person name="Xu H."/>
            <person name="Wei S."/>
            <person name="He X."/>
            <person name="Fang L."/>
            <person name="Zhang Z."/>
            <person name="Zhang Y."/>
            <person name="Huang X."/>
            <person name="Su Z."/>
            <person name="Tong W."/>
            <person name="Li J."/>
            <person name="Tong Z."/>
            <person name="Li S."/>
            <person name="Ye J."/>
            <person name="Wang L."/>
            <person name="Fang L."/>
            <person name="Lei T."/>
            <person name="Chen C.-S."/>
            <person name="Chen H.-C."/>
            <person name="Xu Z."/>
            <person name="Li H."/>
            <person name="Huang H."/>
            <person name="Zhang F."/>
            <person name="Xu H."/>
            <person name="Li N."/>
            <person name="Zhao C."/>
            <person name="Li S."/>
            <person name="Dong L."/>
            <person name="Huang Y."/>
            <person name="Li L."/>
            <person name="Xi Y."/>
            <person name="Qi Q."/>
            <person name="Li W."/>
            <person name="Zhang B."/>
            <person name="Hu W."/>
            <person name="Zhang Y."/>
            <person name="Tian X."/>
            <person name="Jiao Y."/>
            <person name="Liang X."/>
            <person name="Jin J."/>
            <person name="Gao L."/>
            <person name="Zheng W."/>
            <person name="Hao B."/>
            <person name="Liu S.-M."/>
            <person name="Wang W."/>
            <person name="Yuan L."/>
            <person name="Cao M."/>
            <person name="McDermott J."/>
            <person name="Samudrala R."/>
            <person name="Wang J."/>
            <person name="Wong G.K.-S."/>
            <person name="Yang H."/>
        </authorList>
    </citation>
    <scope>NUCLEOTIDE SEQUENCE [LARGE SCALE GENOMIC DNA]</scope>
    <source>
        <strain>cv. Nipponbare</strain>
    </source>
</reference>
<reference key="6">
    <citation type="journal article" date="2003" name="Science">
        <title>Collection, mapping, and annotation of over 28,000 cDNA clones from japonica rice.</title>
        <authorList>
            <consortium name="The rice full-length cDNA consortium"/>
        </authorList>
    </citation>
    <scope>NUCLEOTIDE SEQUENCE [LARGE SCALE MRNA]</scope>
    <source>
        <strain>cv. Nipponbare</strain>
    </source>
</reference>
<reference key="7">
    <citation type="journal article" date="2009" name="Plant Physiol.">
        <title>A germin-like protein gene family functions as a complex quantitative trait locus conferring broad-spectrum disease resistance in rice.</title>
        <authorList>
            <person name="Manosalva P.M."/>
            <person name="Davidson R.M."/>
            <person name="Liu B."/>
            <person name="Zhu X."/>
            <person name="Hulbert S.H."/>
            <person name="Leung H."/>
            <person name="Leach J.E."/>
        </authorList>
    </citation>
    <scope>FUNCTION</scope>
</reference>
<gene>
    <name type="primary">GER6</name>
    <name type="ordered locus">Os08g0189600</name>
    <name type="ordered locus">LOC_Os08g09010</name>
    <name type="ORF">B1099H05.32</name>
    <name type="ORF">OsJ_025246</name>
    <name type="ORF">P0610E02.8</name>
</gene>
<dbReference type="EMBL" id="AF032976">
    <property type="protein sequence ID" value="AAC04837.1"/>
    <property type="molecule type" value="mRNA"/>
</dbReference>
<dbReference type="EMBL" id="AP005505">
    <property type="protein sequence ID" value="BAD05735.1"/>
    <property type="molecule type" value="Genomic_DNA"/>
</dbReference>
<dbReference type="EMBL" id="AP005531">
    <property type="protein sequence ID" value="BAD05774.1"/>
    <property type="molecule type" value="Genomic_DNA"/>
</dbReference>
<dbReference type="EMBL" id="AP008214">
    <property type="protein sequence ID" value="BAF23075.1"/>
    <property type="molecule type" value="Genomic_DNA"/>
</dbReference>
<dbReference type="EMBL" id="AP014964">
    <property type="protein sequence ID" value="BAT04154.1"/>
    <property type="molecule type" value="Genomic_DNA"/>
</dbReference>
<dbReference type="EMBL" id="CM000145">
    <property type="protein sequence ID" value="EAZ41763.1"/>
    <property type="molecule type" value="Genomic_DNA"/>
</dbReference>
<dbReference type="EMBL" id="AK061029">
    <property type="protein sequence ID" value="BAG87684.1"/>
    <property type="molecule type" value="mRNA"/>
</dbReference>
<dbReference type="PIR" id="T02660">
    <property type="entry name" value="T02660"/>
</dbReference>
<dbReference type="RefSeq" id="XP_015650203.1">
    <property type="nucleotide sequence ID" value="XM_015794717.1"/>
</dbReference>
<dbReference type="SMR" id="Q6YZZ2"/>
<dbReference type="FunCoup" id="Q6YZZ2">
    <property type="interactions" value="40"/>
</dbReference>
<dbReference type="STRING" id="39947.Q6YZZ2"/>
<dbReference type="GlyCosmos" id="Q6YZZ2">
    <property type="glycosylation" value="2 sites, No reported glycans"/>
</dbReference>
<dbReference type="PaxDb" id="39947-Q6YZZ2"/>
<dbReference type="EnsemblPlants" id="Os08t0189600-01">
    <property type="protein sequence ID" value="Os08t0189600-01"/>
    <property type="gene ID" value="Os08g0189600"/>
</dbReference>
<dbReference type="Gramene" id="Os08t0189600-01">
    <property type="protein sequence ID" value="Os08t0189600-01"/>
    <property type="gene ID" value="Os08g0189600"/>
</dbReference>
<dbReference type="KEGG" id="dosa:Os08g0189600"/>
<dbReference type="eggNOG" id="ENOG502QQ4A">
    <property type="taxonomic scope" value="Eukaryota"/>
</dbReference>
<dbReference type="HOGENOM" id="CLU_015790_0_0_1"/>
<dbReference type="InParanoid" id="Q6YZZ2"/>
<dbReference type="OMA" id="VNVMQIA"/>
<dbReference type="OrthoDB" id="1850619at2759"/>
<dbReference type="Proteomes" id="UP000000763">
    <property type="component" value="Chromosome 8"/>
</dbReference>
<dbReference type="Proteomes" id="UP000007752">
    <property type="component" value="Chromosome 8"/>
</dbReference>
<dbReference type="Proteomes" id="UP000059680">
    <property type="component" value="Chromosome 8"/>
</dbReference>
<dbReference type="GO" id="GO:0048046">
    <property type="term" value="C:apoplast"/>
    <property type="evidence" value="ECO:0007669"/>
    <property type="project" value="UniProtKB-SubCell"/>
</dbReference>
<dbReference type="GO" id="GO:0030145">
    <property type="term" value="F:manganese ion binding"/>
    <property type="evidence" value="ECO:0007669"/>
    <property type="project" value="InterPro"/>
</dbReference>
<dbReference type="CDD" id="cd02241">
    <property type="entry name" value="cupin_OxOx"/>
    <property type="match status" value="1"/>
</dbReference>
<dbReference type="FunFam" id="2.60.120.10:FF:000005">
    <property type="entry name" value="Germin-like protein subfamily 1 member 8"/>
    <property type="match status" value="1"/>
</dbReference>
<dbReference type="Gene3D" id="2.60.120.10">
    <property type="entry name" value="Jelly Rolls"/>
    <property type="match status" value="1"/>
</dbReference>
<dbReference type="InterPro" id="IPR006045">
    <property type="entry name" value="Cupin_1"/>
</dbReference>
<dbReference type="InterPro" id="IPR001929">
    <property type="entry name" value="Germin"/>
</dbReference>
<dbReference type="InterPro" id="IPR019780">
    <property type="entry name" value="Germin_Mn-BS"/>
</dbReference>
<dbReference type="InterPro" id="IPR014710">
    <property type="entry name" value="RmlC-like_jellyroll"/>
</dbReference>
<dbReference type="InterPro" id="IPR011051">
    <property type="entry name" value="RmlC_Cupin_sf"/>
</dbReference>
<dbReference type="PANTHER" id="PTHR31238">
    <property type="entry name" value="GERMIN-LIKE PROTEIN SUBFAMILY 3 MEMBER 3"/>
    <property type="match status" value="1"/>
</dbReference>
<dbReference type="Pfam" id="PF00190">
    <property type="entry name" value="Cupin_1"/>
    <property type="match status" value="1"/>
</dbReference>
<dbReference type="PRINTS" id="PR00325">
    <property type="entry name" value="GERMIN"/>
</dbReference>
<dbReference type="SMART" id="SM00835">
    <property type="entry name" value="Cupin_1"/>
    <property type="match status" value="1"/>
</dbReference>
<dbReference type="SUPFAM" id="SSF51182">
    <property type="entry name" value="RmlC-like cupins"/>
    <property type="match status" value="1"/>
</dbReference>
<dbReference type="PROSITE" id="PS00725">
    <property type="entry name" value="GERMIN"/>
    <property type="match status" value="1"/>
</dbReference>
<proteinExistence type="evidence at transcript level"/>
<keyword id="KW-0052">Apoplast</keyword>
<keyword id="KW-1015">Disulfide bond</keyword>
<keyword id="KW-0325">Glycoprotein</keyword>
<keyword id="KW-0464">Manganese</keyword>
<keyword id="KW-0479">Metal-binding</keyword>
<keyword id="KW-1185">Reference proteome</keyword>
<keyword id="KW-0964">Secreted</keyword>
<keyword id="KW-0732">Signal</keyword>
<evidence type="ECO:0000250" key="1"/>
<evidence type="ECO:0000255" key="2"/>
<evidence type="ECO:0000269" key="3">
    <source>
    </source>
</evidence>
<evidence type="ECO:0000305" key="4"/>
<sequence>MASPSSFCLLAVLLALVSWQAIASDPSPLQDFCVADKHSPVLVNGFACLDPKYVNADHFFKAAMLDTPRKTNKVGSNVTLINVMQIPGLNTLGISIARIDYAPLGENPPHTHPRATEILTVLEGTLYVGFVTSNPNNTLFSKVLNKGDVFVFPEGLIHFQFNPNPHQPAVALAALSSQNPGAITIANAVFGSKPPISDDILAKAFQVEKGTIDWLQAQFWENNHY</sequence>
<feature type="signal peptide" evidence="2">
    <location>
        <begin position="1"/>
        <end position="23"/>
    </location>
</feature>
<feature type="chain" id="PRO_0000365519" description="Germin-like protein 8-7">
    <location>
        <begin position="24"/>
        <end position="225"/>
    </location>
</feature>
<feature type="domain" description="Cupin type-1" evidence="2">
    <location>
        <begin position="63"/>
        <end position="213"/>
    </location>
</feature>
<feature type="binding site" evidence="1">
    <location>
        <position position="110"/>
    </location>
    <ligand>
        <name>Mn(2+)</name>
        <dbReference type="ChEBI" id="CHEBI:29035"/>
    </ligand>
</feature>
<feature type="binding site" evidence="1">
    <location>
        <position position="112"/>
    </location>
    <ligand>
        <name>Mn(2+)</name>
        <dbReference type="ChEBI" id="CHEBI:29035"/>
    </ligand>
</feature>
<feature type="binding site" evidence="1">
    <location>
        <position position="117"/>
    </location>
    <ligand>
        <name>Mn(2+)</name>
        <dbReference type="ChEBI" id="CHEBI:29035"/>
    </ligand>
</feature>
<feature type="binding site" evidence="1">
    <location>
        <position position="158"/>
    </location>
    <ligand>
        <name>Mn(2+)</name>
        <dbReference type="ChEBI" id="CHEBI:29035"/>
    </ligand>
</feature>
<feature type="glycosylation site" description="N-linked (GlcNAc...) asparagine" evidence="2">
    <location>
        <position position="77"/>
    </location>
</feature>
<feature type="glycosylation site" description="N-linked (GlcNAc...) asparagine" evidence="2">
    <location>
        <position position="136"/>
    </location>
</feature>
<feature type="disulfide bond" evidence="1">
    <location>
        <begin position="33"/>
        <end position="48"/>
    </location>
</feature>
<organism>
    <name type="scientific">Oryza sativa subsp. japonica</name>
    <name type="common">Rice</name>
    <dbReference type="NCBI Taxonomy" id="39947"/>
    <lineage>
        <taxon>Eukaryota</taxon>
        <taxon>Viridiplantae</taxon>
        <taxon>Streptophyta</taxon>
        <taxon>Embryophyta</taxon>
        <taxon>Tracheophyta</taxon>
        <taxon>Spermatophyta</taxon>
        <taxon>Magnoliopsida</taxon>
        <taxon>Liliopsida</taxon>
        <taxon>Poales</taxon>
        <taxon>Poaceae</taxon>
        <taxon>BOP clade</taxon>
        <taxon>Oryzoideae</taxon>
        <taxon>Oryzeae</taxon>
        <taxon>Oryzinae</taxon>
        <taxon>Oryza</taxon>
        <taxon>Oryza sativa</taxon>
    </lineage>
</organism>
<name>GL87_ORYSJ</name>